<feature type="peptide" id="PRO_0000429399" description="Glucagon-1" evidence="3">
    <location>
        <begin position="1"/>
        <end position="37"/>
    </location>
</feature>
<comment type="function">
    <text evidence="1">Glucagon plays a key role in glucose metabolism and homeostasis. Regulates blood glucose by increasing gluconeogenesis and decreasing glycolysis (By similarity).</text>
</comment>
<comment type="subcellular location">
    <subcellularLocation>
        <location evidence="1">Secreted</location>
    </subcellularLocation>
</comment>
<comment type="induction">
    <text evidence="1">Produced in the A cells of the islets of Langerhans in response to a drop in blood sugar concentration.</text>
</comment>
<comment type="similarity">
    <text evidence="2">Belongs to the glucagon family.</text>
</comment>
<evidence type="ECO:0000250" key="1"/>
<evidence type="ECO:0000255" key="2"/>
<evidence type="ECO:0000269" key="3">
    <source>
    </source>
</evidence>
<evidence type="ECO:0000303" key="4">
    <source>
    </source>
</evidence>
<evidence type="ECO:0000305" key="5"/>
<proteinExistence type="evidence at protein level"/>
<sequence length="37" mass="4440">HSQGMFTNDYSKYLEEKRAKEFVEWLKNGESKRQGMS</sequence>
<name>GLUC1_HUSDA</name>
<reference evidence="5" key="1">
    <citation type="journal article" date="2000" name="Peptides">
        <title>Multiple molecular forms of glucagon and insulin in the kaluga sturgeon, Huso dauricus.</title>
        <authorList>
            <person name="Andoh T."/>
            <person name="Nagasawa H."/>
            <person name="Matsubara T."/>
        </authorList>
    </citation>
    <scope>PROTEIN SEQUENCE</scope>
    <source>
        <tissue evidence="3">Pancreas</tissue>
    </source>
</reference>
<organism>
    <name type="scientific">Huso dauricus</name>
    <name type="common">Kaluga sturgeon</name>
    <name type="synonym">Acipenser dauricus</name>
    <dbReference type="NCBI Taxonomy" id="55293"/>
    <lineage>
        <taxon>Eukaryota</taxon>
        <taxon>Metazoa</taxon>
        <taxon>Chordata</taxon>
        <taxon>Craniata</taxon>
        <taxon>Vertebrata</taxon>
        <taxon>Euteleostomi</taxon>
        <taxon>Actinopterygii</taxon>
        <taxon>Chondrostei</taxon>
        <taxon>Acipenseriformes</taxon>
        <taxon>Acipenseridae</taxon>
        <taxon>Huso</taxon>
    </lineage>
</organism>
<protein>
    <recommendedName>
        <fullName>Glucagon-1</fullName>
    </recommendedName>
    <alternativeName>
        <fullName evidence="4">Glucagon-I</fullName>
    </alternativeName>
</protein>
<keyword id="KW-0903">Direct protein sequencing</keyword>
<keyword id="KW-0372">Hormone</keyword>
<keyword id="KW-0964">Secreted</keyword>
<dbReference type="SMR" id="C0HJJ3"/>
<dbReference type="GO" id="GO:0005576">
    <property type="term" value="C:extracellular region"/>
    <property type="evidence" value="ECO:0007669"/>
    <property type="project" value="UniProtKB-SubCell"/>
</dbReference>
<dbReference type="GO" id="GO:0005179">
    <property type="term" value="F:hormone activity"/>
    <property type="evidence" value="ECO:0007669"/>
    <property type="project" value="UniProtKB-KW"/>
</dbReference>
<dbReference type="Gene3D" id="6.10.250.590">
    <property type="match status" value="1"/>
</dbReference>
<dbReference type="InterPro" id="IPR015550">
    <property type="entry name" value="Glucagon"/>
</dbReference>
<dbReference type="InterPro" id="IPR000532">
    <property type="entry name" value="Glucagon_GIP_secretin_VIP"/>
</dbReference>
<dbReference type="PANTHER" id="PTHR11418">
    <property type="entry name" value="GLUCAGON"/>
    <property type="match status" value="1"/>
</dbReference>
<dbReference type="PANTHER" id="PTHR11418:SF0">
    <property type="entry name" value="PRO-GLUCAGON"/>
    <property type="match status" value="1"/>
</dbReference>
<dbReference type="Pfam" id="PF00123">
    <property type="entry name" value="Hormone_2"/>
    <property type="match status" value="1"/>
</dbReference>
<dbReference type="PRINTS" id="PR00275">
    <property type="entry name" value="GLUCAGON"/>
</dbReference>
<dbReference type="SMART" id="SM00070">
    <property type="entry name" value="GLUCA"/>
    <property type="match status" value="1"/>
</dbReference>
<dbReference type="PROSITE" id="PS00260">
    <property type="entry name" value="GLUCAGON"/>
    <property type="match status" value="1"/>
</dbReference>
<accession>C0HJJ3</accession>